<feature type="chain" id="PRO_0000348334" description="UPF0637 protein SERP0693">
    <location>
        <begin position="1"/>
        <end position="203"/>
    </location>
</feature>
<comment type="similarity">
    <text evidence="1">Belongs to the UPF0637 family.</text>
</comment>
<keyword id="KW-1185">Reference proteome</keyword>
<accession>Q5HQ63</accession>
<protein>
    <recommendedName>
        <fullName evidence="1">UPF0637 protein SERP0693</fullName>
    </recommendedName>
</protein>
<gene>
    <name type="ordered locus">SERP0693</name>
</gene>
<organism>
    <name type="scientific">Staphylococcus epidermidis (strain ATCC 35984 / DSM 28319 / BCRC 17069 / CCUG 31568 / BM 3577 / RP62A)</name>
    <dbReference type="NCBI Taxonomy" id="176279"/>
    <lineage>
        <taxon>Bacteria</taxon>
        <taxon>Bacillati</taxon>
        <taxon>Bacillota</taxon>
        <taxon>Bacilli</taxon>
        <taxon>Bacillales</taxon>
        <taxon>Staphylococcaceae</taxon>
        <taxon>Staphylococcus</taxon>
    </lineage>
</organism>
<name>Y693_STAEQ</name>
<evidence type="ECO:0000255" key="1">
    <source>
        <dbReference type="HAMAP-Rule" id="MF_01851"/>
    </source>
</evidence>
<proteinExistence type="inferred from homology"/>
<sequence length="203" mass="24103">MTQYTFSPKDFKAFEVEGLDQRMEALNDYVRPQLHQLGSYFEEYFTTQTGETFYAHVAKHARRSVNPPIDTWVAFAPNKRGYKMLPHFQIGLFRNQLFIMFGIMHEGRNKEEKVKIFDKHFDKLTSLPSDYSVSLDHMKTEKHYIKDMSNEELHAAIDRVKNVKKGEFFVARTLSPTDKRLKSDKSFLKFVEETFDEFLKFYQ</sequence>
<dbReference type="EMBL" id="CP000029">
    <property type="protein sequence ID" value="AAW54080.1"/>
    <property type="molecule type" value="Genomic_DNA"/>
</dbReference>
<dbReference type="RefSeq" id="WP_001831689.1">
    <property type="nucleotide sequence ID" value="NC_002976.3"/>
</dbReference>
<dbReference type="SMR" id="Q5HQ63"/>
<dbReference type="STRING" id="176279.SERP0693"/>
<dbReference type="KEGG" id="ser:SERP0693"/>
<dbReference type="eggNOG" id="COG4493">
    <property type="taxonomic scope" value="Bacteria"/>
</dbReference>
<dbReference type="HOGENOM" id="CLU_096059_0_0_9"/>
<dbReference type="Proteomes" id="UP000000531">
    <property type="component" value="Chromosome"/>
</dbReference>
<dbReference type="Gene3D" id="3.30.930.20">
    <property type="entry name" value="Protein of unknown function DUF1054"/>
    <property type="match status" value="1"/>
</dbReference>
<dbReference type="HAMAP" id="MF_01851">
    <property type="entry name" value="UPF0637"/>
    <property type="match status" value="1"/>
</dbReference>
<dbReference type="InterPro" id="IPR009403">
    <property type="entry name" value="UPF0637"/>
</dbReference>
<dbReference type="InterPro" id="IPR053707">
    <property type="entry name" value="UPF0637_domain_sf"/>
</dbReference>
<dbReference type="Pfam" id="PF06335">
    <property type="entry name" value="DUF1054"/>
    <property type="match status" value="1"/>
</dbReference>
<dbReference type="PIRSF" id="PIRSF021332">
    <property type="entry name" value="DUF1054"/>
    <property type="match status" value="1"/>
</dbReference>
<dbReference type="SUPFAM" id="SSF142913">
    <property type="entry name" value="YktB/PF0168-like"/>
    <property type="match status" value="1"/>
</dbReference>
<reference key="1">
    <citation type="journal article" date="2005" name="J. Bacteriol.">
        <title>Insights on evolution of virulence and resistance from the complete genome analysis of an early methicillin-resistant Staphylococcus aureus strain and a biofilm-producing methicillin-resistant Staphylococcus epidermidis strain.</title>
        <authorList>
            <person name="Gill S.R."/>
            <person name="Fouts D.E."/>
            <person name="Archer G.L."/>
            <person name="Mongodin E.F."/>
            <person name="DeBoy R.T."/>
            <person name="Ravel J."/>
            <person name="Paulsen I.T."/>
            <person name="Kolonay J.F."/>
            <person name="Brinkac L.M."/>
            <person name="Beanan M.J."/>
            <person name="Dodson R.J."/>
            <person name="Daugherty S.C."/>
            <person name="Madupu R."/>
            <person name="Angiuoli S.V."/>
            <person name="Durkin A.S."/>
            <person name="Haft D.H."/>
            <person name="Vamathevan J.J."/>
            <person name="Khouri H."/>
            <person name="Utterback T.R."/>
            <person name="Lee C."/>
            <person name="Dimitrov G."/>
            <person name="Jiang L."/>
            <person name="Qin H."/>
            <person name="Weidman J."/>
            <person name="Tran K."/>
            <person name="Kang K.H."/>
            <person name="Hance I.R."/>
            <person name="Nelson K.E."/>
            <person name="Fraser C.M."/>
        </authorList>
    </citation>
    <scope>NUCLEOTIDE SEQUENCE [LARGE SCALE GENOMIC DNA]</scope>
    <source>
        <strain>ATCC 35984 / DSM 28319 / BCRC 17069 / CCUG 31568 / BM 3577 / RP62A</strain>
    </source>
</reference>